<feature type="chain" id="PRO_0000364433" description="Probable rhamnogalacturonan acetylesterase YesY">
    <location>
        <begin position="1"/>
        <end position="217"/>
    </location>
</feature>
<feature type="active site" description="Nucleophile" evidence="1">
    <location>
        <position position="11"/>
    </location>
</feature>
<feature type="active site" evidence="1">
    <location>
        <position position="178"/>
    </location>
</feature>
<feature type="active site" evidence="1">
    <location>
        <position position="185"/>
    </location>
</feature>
<organism>
    <name type="scientific">Bacillus subtilis (strain 168)</name>
    <dbReference type="NCBI Taxonomy" id="224308"/>
    <lineage>
        <taxon>Bacteria</taxon>
        <taxon>Bacillati</taxon>
        <taxon>Bacillota</taxon>
        <taxon>Bacilli</taxon>
        <taxon>Bacillales</taxon>
        <taxon>Bacillaceae</taxon>
        <taxon>Bacillus</taxon>
    </lineage>
</organism>
<gene>
    <name type="primary">yesY</name>
    <name type="ordered locus">BSU07070</name>
</gene>
<dbReference type="EC" id="3.1.1.-"/>
<dbReference type="EMBL" id="AL009126">
    <property type="protein sequence ID" value="CAB12526.1"/>
    <property type="molecule type" value="Genomic_DNA"/>
</dbReference>
<dbReference type="PIR" id="H69797">
    <property type="entry name" value="H69797"/>
</dbReference>
<dbReference type="RefSeq" id="NP_388588.1">
    <property type="nucleotide sequence ID" value="NC_000964.3"/>
</dbReference>
<dbReference type="RefSeq" id="WP_003244014.1">
    <property type="nucleotide sequence ID" value="NZ_OZ025638.1"/>
</dbReference>
<dbReference type="SMR" id="O31528"/>
<dbReference type="FunCoup" id="O31528">
    <property type="interactions" value="52"/>
</dbReference>
<dbReference type="STRING" id="224308.BSU07070"/>
<dbReference type="PaxDb" id="224308-BSU07070"/>
<dbReference type="EnsemblBacteria" id="CAB12526">
    <property type="protein sequence ID" value="CAB12526"/>
    <property type="gene ID" value="BSU_07070"/>
</dbReference>
<dbReference type="GeneID" id="938772"/>
<dbReference type="KEGG" id="bsu:BSU07070"/>
<dbReference type="PATRIC" id="fig|224308.179.peg.767"/>
<dbReference type="eggNOG" id="COG2755">
    <property type="taxonomic scope" value="Bacteria"/>
</dbReference>
<dbReference type="InParanoid" id="O31528"/>
<dbReference type="OrthoDB" id="9807041at2"/>
<dbReference type="PhylomeDB" id="O31528"/>
<dbReference type="BioCyc" id="BSUB:BSU07070-MONOMER"/>
<dbReference type="Proteomes" id="UP000001570">
    <property type="component" value="Chromosome"/>
</dbReference>
<dbReference type="GO" id="GO:0016788">
    <property type="term" value="F:hydrolase activity, acting on ester bonds"/>
    <property type="evidence" value="ECO:0007669"/>
    <property type="project" value="InterPro"/>
</dbReference>
<dbReference type="CDD" id="cd01821">
    <property type="entry name" value="Rhamnogalacturan_acetylesterase_like"/>
    <property type="match status" value="1"/>
</dbReference>
<dbReference type="Gene3D" id="3.40.50.1110">
    <property type="entry name" value="SGNH hydrolase"/>
    <property type="match status" value="1"/>
</dbReference>
<dbReference type="InterPro" id="IPR001087">
    <property type="entry name" value="GDSL"/>
</dbReference>
<dbReference type="InterPro" id="IPR037459">
    <property type="entry name" value="RhgT-like"/>
</dbReference>
<dbReference type="InterPro" id="IPR036514">
    <property type="entry name" value="SGNH_hydro_sf"/>
</dbReference>
<dbReference type="PANTHER" id="PTHR43695">
    <property type="entry name" value="PUTATIVE (AFU_ORTHOLOGUE AFUA_2G17250)-RELATED"/>
    <property type="match status" value="1"/>
</dbReference>
<dbReference type="PANTHER" id="PTHR43695:SF1">
    <property type="entry name" value="RHAMNOGALACTURONAN ACETYLESTERASE"/>
    <property type="match status" value="1"/>
</dbReference>
<dbReference type="Pfam" id="PF00657">
    <property type="entry name" value="Lipase_GDSL"/>
    <property type="match status" value="1"/>
</dbReference>
<dbReference type="SUPFAM" id="SSF52266">
    <property type="entry name" value="SGNH hydrolase"/>
    <property type="match status" value="1"/>
</dbReference>
<comment type="function">
    <text evidence="2">May play a role in the degradation of rhamnogalacturonan derived from plant cell walls. Probably has broad substrate specificity and may degrade several types of acetylated substrates.</text>
</comment>
<comment type="induction">
    <text evidence="2">Up-regulated by growth on type I rhamnogalacturonan.</text>
</comment>
<comment type="similarity">
    <text evidence="3">Belongs to the 'GDSL' lipolytic enzyme family.</text>
</comment>
<accession>O31528</accession>
<evidence type="ECO:0000250" key="1"/>
<evidence type="ECO:0000269" key="2">
    <source>
    </source>
</evidence>
<evidence type="ECO:0000305" key="3"/>
<sequence>MANHIYLAGDSTVQTYGDSTNQGGWGQFLGSHLPEHIQVINRAIGGRSSKTFVEEGRLQAILDVIEPDDWLFVQMGHNDASKNKPERYTEPYTTYKQYLKQYIAGAREKGAHPLLITPVARFHYENGVFLNDFPDYCIAMKQTAAEENVQLIDLMEKSLAFFTEKGEEKVYTYFMISEGINDYTHFTKKGANEMAKLVAKGIKELGLPLTESIIKER</sequence>
<name>RHGT2_BACSU</name>
<protein>
    <recommendedName>
        <fullName>Probable rhamnogalacturonan acetylesterase YesY</fullName>
        <shortName>RGAE</shortName>
        <ecNumber>3.1.1.-</ecNumber>
    </recommendedName>
</protein>
<keyword id="KW-0378">Hydrolase</keyword>
<keyword id="KW-1185">Reference proteome</keyword>
<proteinExistence type="evidence at protein level"/>
<reference key="1">
    <citation type="journal article" date="1997" name="Nature">
        <title>The complete genome sequence of the Gram-positive bacterium Bacillus subtilis.</title>
        <authorList>
            <person name="Kunst F."/>
            <person name="Ogasawara N."/>
            <person name="Moszer I."/>
            <person name="Albertini A.M."/>
            <person name="Alloni G."/>
            <person name="Azevedo V."/>
            <person name="Bertero M.G."/>
            <person name="Bessieres P."/>
            <person name="Bolotin A."/>
            <person name="Borchert S."/>
            <person name="Borriss R."/>
            <person name="Boursier L."/>
            <person name="Brans A."/>
            <person name="Braun M."/>
            <person name="Brignell S.C."/>
            <person name="Bron S."/>
            <person name="Brouillet S."/>
            <person name="Bruschi C.V."/>
            <person name="Caldwell B."/>
            <person name="Capuano V."/>
            <person name="Carter N.M."/>
            <person name="Choi S.-K."/>
            <person name="Codani J.-J."/>
            <person name="Connerton I.F."/>
            <person name="Cummings N.J."/>
            <person name="Daniel R.A."/>
            <person name="Denizot F."/>
            <person name="Devine K.M."/>
            <person name="Duesterhoeft A."/>
            <person name="Ehrlich S.D."/>
            <person name="Emmerson P.T."/>
            <person name="Entian K.-D."/>
            <person name="Errington J."/>
            <person name="Fabret C."/>
            <person name="Ferrari E."/>
            <person name="Foulger D."/>
            <person name="Fritz C."/>
            <person name="Fujita M."/>
            <person name="Fujita Y."/>
            <person name="Fuma S."/>
            <person name="Galizzi A."/>
            <person name="Galleron N."/>
            <person name="Ghim S.-Y."/>
            <person name="Glaser P."/>
            <person name="Goffeau A."/>
            <person name="Golightly E.J."/>
            <person name="Grandi G."/>
            <person name="Guiseppi G."/>
            <person name="Guy B.J."/>
            <person name="Haga K."/>
            <person name="Haiech J."/>
            <person name="Harwood C.R."/>
            <person name="Henaut A."/>
            <person name="Hilbert H."/>
            <person name="Holsappel S."/>
            <person name="Hosono S."/>
            <person name="Hullo M.-F."/>
            <person name="Itaya M."/>
            <person name="Jones L.-M."/>
            <person name="Joris B."/>
            <person name="Karamata D."/>
            <person name="Kasahara Y."/>
            <person name="Klaerr-Blanchard M."/>
            <person name="Klein C."/>
            <person name="Kobayashi Y."/>
            <person name="Koetter P."/>
            <person name="Koningstein G."/>
            <person name="Krogh S."/>
            <person name="Kumano M."/>
            <person name="Kurita K."/>
            <person name="Lapidus A."/>
            <person name="Lardinois S."/>
            <person name="Lauber J."/>
            <person name="Lazarevic V."/>
            <person name="Lee S.-M."/>
            <person name="Levine A."/>
            <person name="Liu H."/>
            <person name="Masuda S."/>
            <person name="Mauel C."/>
            <person name="Medigue C."/>
            <person name="Medina N."/>
            <person name="Mellado R.P."/>
            <person name="Mizuno M."/>
            <person name="Moestl D."/>
            <person name="Nakai S."/>
            <person name="Noback M."/>
            <person name="Noone D."/>
            <person name="O'Reilly M."/>
            <person name="Ogawa K."/>
            <person name="Ogiwara A."/>
            <person name="Oudega B."/>
            <person name="Park S.-H."/>
            <person name="Parro V."/>
            <person name="Pohl T.M."/>
            <person name="Portetelle D."/>
            <person name="Porwollik S."/>
            <person name="Prescott A.M."/>
            <person name="Presecan E."/>
            <person name="Pujic P."/>
            <person name="Purnelle B."/>
            <person name="Rapoport G."/>
            <person name="Rey M."/>
            <person name="Reynolds S."/>
            <person name="Rieger M."/>
            <person name="Rivolta C."/>
            <person name="Rocha E."/>
            <person name="Roche B."/>
            <person name="Rose M."/>
            <person name="Sadaie Y."/>
            <person name="Sato T."/>
            <person name="Scanlan E."/>
            <person name="Schleich S."/>
            <person name="Schroeter R."/>
            <person name="Scoffone F."/>
            <person name="Sekiguchi J."/>
            <person name="Sekowska A."/>
            <person name="Seror S.J."/>
            <person name="Serror P."/>
            <person name="Shin B.-S."/>
            <person name="Soldo B."/>
            <person name="Sorokin A."/>
            <person name="Tacconi E."/>
            <person name="Takagi T."/>
            <person name="Takahashi H."/>
            <person name="Takemaru K."/>
            <person name="Takeuchi M."/>
            <person name="Tamakoshi A."/>
            <person name="Tanaka T."/>
            <person name="Terpstra P."/>
            <person name="Tognoni A."/>
            <person name="Tosato V."/>
            <person name="Uchiyama S."/>
            <person name="Vandenbol M."/>
            <person name="Vannier F."/>
            <person name="Vassarotti A."/>
            <person name="Viari A."/>
            <person name="Wambutt R."/>
            <person name="Wedler E."/>
            <person name="Wedler H."/>
            <person name="Weitzenegger T."/>
            <person name="Winters P."/>
            <person name="Wipat A."/>
            <person name="Yamamoto H."/>
            <person name="Yamane K."/>
            <person name="Yasumoto K."/>
            <person name="Yata K."/>
            <person name="Yoshida K."/>
            <person name="Yoshikawa H.-F."/>
            <person name="Zumstein E."/>
            <person name="Yoshikawa H."/>
            <person name="Danchin A."/>
        </authorList>
    </citation>
    <scope>NUCLEOTIDE SEQUENCE [LARGE SCALE GENOMIC DNA]</scope>
    <source>
        <strain>168</strain>
    </source>
</reference>
<reference key="2">
    <citation type="journal article" date="2007" name="Appl. Environ. Microbiol.">
        <title>Plant cell wall degradation by saprophytic Bacillus subtilis strains: gene clusters responsible for rhamnogalacturonan depolymerization.</title>
        <authorList>
            <person name="Ochiai A."/>
            <person name="Itoh T."/>
            <person name="Kawamata A."/>
            <person name="Hashimoto W."/>
            <person name="Murata K."/>
        </authorList>
    </citation>
    <scope>FUNCTION IN DEGRADATION OF TYPE I RHAMNOGALACTURONAN</scope>
    <scope>INDUCTION</scope>
    <source>
        <strain>168</strain>
    </source>
</reference>